<keyword id="KW-0067">ATP-binding</keyword>
<keyword id="KW-0378">Hydrolase</keyword>
<keyword id="KW-0547">Nucleotide-binding</keyword>
<keyword id="KW-1185">Reference proteome</keyword>
<evidence type="ECO:0000255" key="1">
    <source>
        <dbReference type="HAMAP-Rule" id="MF_00691"/>
    </source>
</evidence>
<reference key="1">
    <citation type="journal article" date="2004" name="Nucleic Acids Res.">
        <title>Genome sequence of Symbiobacterium thermophilum, an uncultivable bacterium that depends on microbial commensalism.</title>
        <authorList>
            <person name="Ueda K."/>
            <person name="Yamashita A."/>
            <person name="Ishikawa J."/>
            <person name="Shimada M."/>
            <person name="Watsuji T."/>
            <person name="Morimura K."/>
            <person name="Ikeda H."/>
            <person name="Hattori M."/>
            <person name="Beppu T."/>
        </authorList>
    </citation>
    <scope>NUCLEOTIDE SEQUENCE [LARGE SCALE GENOMIC DNA]</scope>
    <source>
        <strain>DSM 24528 / JCM 14929 / IAM 14863 / T</strain>
    </source>
</reference>
<accession>Q67LD9</accession>
<protein>
    <recommendedName>
        <fullName evidence="1">5-oxoprolinase subunit A</fullName>
        <shortName evidence="1">5-OPase subunit A</shortName>
        <ecNumber evidence="1">3.5.2.9</ecNumber>
    </recommendedName>
    <alternativeName>
        <fullName evidence="1">5-oxoprolinase (ATP-hydrolyzing) subunit A</fullName>
    </alternativeName>
</protein>
<name>PXPA_SYMTH</name>
<comment type="function">
    <text evidence="1">Catalyzes the cleavage of 5-oxoproline to form L-glutamate coupled to the hydrolysis of ATP to ADP and inorganic phosphate.</text>
</comment>
<comment type="catalytic activity">
    <reaction evidence="1">
        <text>5-oxo-L-proline + ATP + 2 H2O = L-glutamate + ADP + phosphate + H(+)</text>
        <dbReference type="Rhea" id="RHEA:10348"/>
        <dbReference type="ChEBI" id="CHEBI:15377"/>
        <dbReference type="ChEBI" id="CHEBI:15378"/>
        <dbReference type="ChEBI" id="CHEBI:29985"/>
        <dbReference type="ChEBI" id="CHEBI:30616"/>
        <dbReference type="ChEBI" id="CHEBI:43474"/>
        <dbReference type="ChEBI" id="CHEBI:58402"/>
        <dbReference type="ChEBI" id="CHEBI:456216"/>
        <dbReference type="EC" id="3.5.2.9"/>
    </reaction>
</comment>
<comment type="subunit">
    <text evidence="1">Forms a complex composed of PxpA, PxpB and PxpC.</text>
</comment>
<comment type="similarity">
    <text evidence="1">Belongs to the LamB/PxpA family.</text>
</comment>
<dbReference type="EC" id="3.5.2.9" evidence="1"/>
<dbReference type="EMBL" id="AP006840">
    <property type="protein sequence ID" value="BAD41507.1"/>
    <property type="molecule type" value="Genomic_DNA"/>
</dbReference>
<dbReference type="RefSeq" id="WP_011196645.1">
    <property type="nucleotide sequence ID" value="NC_006177.1"/>
</dbReference>
<dbReference type="SMR" id="Q67LD9"/>
<dbReference type="STRING" id="292459.STH2522"/>
<dbReference type="KEGG" id="sth:STH2522"/>
<dbReference type="eggNOG" id="COG1540">
    <property type="taxonomic scope" value="Bacteria"/>
</dbReference>
<dbReference type="HOGENOM" id="CLU_069535_0_0_9"/>
<dbReference type="OrthoDB" id="9773478at2"/>
<dbReference type="Proteomes" id="UP000000417">
    <property type="component" value="Chromosome"/>
</dbReference>
<dbReference type="GO" id="GO:0017168">
    <property type="term" value="F:5-oxoprolinase (ATP-hydrolyzing) activity"/>
    <property type="evidence" value="ECO:0007669"/>
    <property type="project" value="UniProtKB-UniRule"/>
</dbReference>
<dbReference type="GO" id="GO:0005524">
    <property type="term" value="F:ATP binding"/>
    <property type="evidence" value="ECO:0007669"/>
    <property type="project" value="UniProtKB-UniRule"/>
</dbReference>
<dbReference type="GO" id="GO:0005975">
    <property type="term" value="P:carbohydrate metabolic process"/>
    <property type="evidence" value="ECO:0007669"/>
    <property type="project" value="InterPro"/>
</dbReference>
<dbReference type="CDD" id="cd10787">
    <property type="entry name" value="LamB_YcsF_like"/>
    <property type="match status" value="1"/>
</dbReference>
<dbReference type="Gene3D" id="3.20.20.370">
    <property type="entry name" value="Glycoside hydrolase/deacetylase"/>
    <property type="match status" value="1"/>
</dbReference>
<dbReference type="HAMAP" id="MF_00691">
    <property type="entry name" value="PxpA"/>
    <property type="match status" value="1"/>
</dbReference>
<dbReference type="InterPro" id="IPR011330">
    <property type="entry name" value="Glyco_hydro/deAcase_b/a-brl"/>
</dbReference>
<dbReference type="InterPro" id="IPR005501">
    <property type="entry name" value="LamB/YcsF/PxpA-like"/>
</dbReference>
<dbReference type="NCBIfam" id="NF003814">
    <property type="entry name" value="PRK05406.1-3"/>
    <property type="match status" value="1"/>
</dbReference>
<dbReference type="NCBIfam" id="NF003816">
    <property type="entry name" value="PRK05406.1-5"/>
    <property type="match status" value="1"/>
</dbReference>
<dbReference type="PANTHER" id="PTHR30292:SF0">
    <property type="entry name" value="5-OXOPROLINASE SUBUNIT A"/>
    <property type="match status" value="1"/>
</dbReference>
<dbReference type="PANTHER" id="PTHR30292">
    <property type="entry name" value="UNCHARACTERIZED PROTEIN YBGL-RELATED"/>
    <property type="match status" value="1"/>
</dbReference>
<dbReference type="Pfam" id="PF03746">
    <property type="entry name" value="LamB_YcsF"/>
    <property type="match status" value="1"/>
</dbReference>
<dbReference type="SUPFAM" id="SSF88713">
    <property type="entry name" value="Glycoside hydrolase/deacetylase"/>
    <property type="match status" value="1"/>
</dbReference>
<gene>
    <name evidence="1" type="primary">pxpA</name>
    <name type="ordered locus">STH2522</name>
</gene>
<proteinExistence type="inferred from homology"/>
<sequence>MGAIRGPVRKIDLNCDMGESFGVYRIGADEEIMPLITSANIACGFHGGDPQVMRRTVRLAREHGVAVGAHPGYRDLVGFWRRPVRCSPDEVYADVLYQIGALAAFCRAEGVALRHVKPHGALYNTAAADAAIAGAVARAVADFDRSLMLYAPPGSALEQAGLAAGLRVIREGFADRGYAADGTLLPRTHPGAVLHEPERAAAQARGMVCSGTVTADTGEEVAVPAETLCVHGDHPSVIQVLRRIRSELEAAGVSVGAPGAD</sequence>
<feature type="chain" id="PRO_0000185054" description="5-oxoprolinase subunit A">
    <location>
        <begin position="1"/>
        <end position="261"/>
    </location>
</feature>
<organism>
    <name type="scientific">Symbiobacterium thermophilum (strain DSM 24528 / JCM 14929 / IAM 14863 / T)</name>
    <dbReference type="NCBI Taxonomy" id="292459"/>
    <lineage>
        <taxon>Bacteria</taxon>
        <taxon>Bacillati</taxon>
        <taxon>Bacillota</taxon>
        <taxon>Clostridia</taxon>
        <taxon>Eubacteriales</taxon>
        <taxon>Symbiobacteriaceae</taxon>
        <taxon>Symbiobacterium</taxon>
    </lineage>
</organism>